<evidence type="ECO:0000255" key="1">
    <source>
        <dbReference type="HAMAP-Rule" id="MF_00604"/>
    </source>
</evidence>
<accession>Q8PYK3</accession>
<gene>
    <name type="ordered locus">MM_0858</name>
</gene>
<name>SUI1_METMA</name>
<feature type="chain" id="PRO_0000130582" description="Protein translation factor SUI1 homolog">
    <location>
        <begin position="1"/>
        <end position="102"/>
    </location>
</feature>
<sequence length="102" mass="11382">MSSGMCPVCGLPKELCICEEVAKEQQRITVKVNRRRYGKEVTVVEGFDASEIDLHELSTYLKSKFACGGTVKGNTVELQGNHLTRMKEVLMEKGFSAEQIKN</sequence>
<dbReference type="EMBL" id="AE008384">
    <property type="protein sequence ID" value="AAM30554.1"/>
    <property type="molecule type" value="Genomic_DNA"/>
</dbReference>
<dbReference type="SMR" id="Q8PYK3"/>
<dbReference type="KEGG" id="mma:MM_0858"/>
<dbReference type="PATRIC" id="fig|192952.21.peg.1014"/>
<dbReference type="eggNOG" id="arCOG04223">
    <property type="taxonomic scope" value="Archaea"/>
</dbReference>
<dbReference type="HOGENOM" id="CLU_082805_6_1_2"/>
<dbReference type="Proteomes" id="UP000000595">
    <property type="component" value="Chromosome"/>
</dbReference>
<dbReference type="GO" id="GO:0003729">
    <property type="term" value="F:mRNA binding"/>
    <property type="evidence" value="ECO:0007669"/>
    <property type="project" value="TreeGrafter"/>
</dbReference>
<dbReference type="GO" id="GO:0003743">
    <property type="term" value="F:translation initiation factor activity"/>
    <property type="evidence" value="ECO:0007669"/>
    <property type="project" value="InterPro"/>
</dbReference>
<dbReference type="GO" id="GO:0001731">
    <property type="term" value="P:formation of translation preinitiation complex"/>
    <property type="evidence" value="ECO:0007669"/>
    <property type="project" value="TreeGrafter"/>
</dbReference>
<dbReference type="GO" id="GO:0006417">
    <property type="term" value="P:regulation of translation"/>
    <property type="evidence" value="ECO:0007669"/>
    <property type="project" value="UniProtKB-UniRule"/>
</dbReference>
<dbReference type="GO" id="GO:0002188">
    <property type="term" value="P:translation reinitiation"/>
    <property type="evidence" value="ECO:0007669"/>
    <property type="project" value="TreeGrafter"/>
</dbReference>
<dbReference type="CDD" id="cd11567">
    <property type="entry name" value="YciH_like"/>
    <property type="match status" value="1"/>
</dbReference>
<dbReference type="FunFam" id="3.30.780.10:FF:000006">
    <property type="entry name" value="Protein translation factor SUI1 homolog"/>
    <property type="match status" value="1"/>
</dbReference>
<dbReference type="Gene3D" id="3.30.780.10">
    <property type="entry name" value="SUI1-like domain"/>
    <property type="match status" value="1"/>
</dbReference>
<dbReference type="HAMAP" id="MF_00604">
    <property type="entry name" value="SUI1"/>
    <property type="match status" value="1"/>
</dbReference>
<dbReference type="InterPro" id="IPR050318">
    <property type="entry name" value="DENR/SUI1_TIF"/>
</dbReference>
<dbReference type="InterPro" id="IPR001950">
    <property type="entry name" value="SUI1"/>
</dbReference>
<dbReference type="InterPro" id="IPR022851">
    <property type="entry name" value="SUI1_arc"/>
</dbReference>
<dbReference type="InterPro" id="IPR005872">
    <property type="entry name" value="SUI1_arc_bac"/>
</dbReference>
<dbReference type="InterPro" id="IPR036877">
    <property type="entry name" value="SUI1_dom_sf"/>
</dbReference>
<dbReference type="NCBIfam" id="NF002096">
    <property type="entry name" value="PRK00939.1"/>
    <property type="match status" value="1"/>
</dbReference>
<dbReference type="NCBIfam" id="TIGR01158">
    <property type="entry name" value="SUI1_rel"/>
    <property type="match status" value="1"/>
</dbReference>
<dbReference type="PANTHER" id="PTHR12789:SF0">
    <property type="entry name" value="DENSITY-REGULATED PROTEIN"/>
    <property type="match status" value="1"/>
</dbReference>
<dbReference type="PANTHER" id="PTHR12789">
    <property type="entry name" value="DENSITY-REGULATED PROTEIN HOMOLOG"/>
    <property type="match status" value="1"/>
</dbReference>
<dbReference type="Pfam" id="PF01253">
    <property type="entry name" value="SUI1"/>
    <property type="match status" value="1"/>
</dbReference>
<dbReference type="PIRSF" id="PIRSF037511">
    <property type="entry name" value="Transl_init_SUI1_pro"/>
    <property type="match status" value="1"/>
</dbReference>
<dbReference type="SUPFAM" id="SSF55159">
    <property type="entry name" value="eIF1-like"/>
    <property type="match status" value="1"/>
</dbReference>
<dbReference type="PROSITE" id="PS50296">
    <property type="entry name" value="SUI1"/>
    <property type="match status" value="1"/>
</dbReference>
<protein>
    <recommendedName>
        <fullName evidence="1">Protein translation factor SUI1 homolog</fullName>
    </recommendedName>
</protein>
<reference key="1">
    <citation type="journal article" date="2002" name="J. Mol. Microbiol. Biotechnol.">
        <title>The genome of Methanosarcina mazei: evidence for lateral gene transfer between Bacteria and Archaea.</title>
        <authorList>
            <person name="Deppenmeier U."/>
            <person name="Johann A."/>
            <person name="Hartsch T."/>
            <person name="Merkl R."/>
            <person name="Schmitz R.A."/>
            <person name="Martinez-Arias R."/>
            <person name="Henne A."/>
            <person name="Wiezer A."/>
            <person name="Baeumer S."/>
            <person name="Jacobi C."/>
            <person name="Brueggemann H."/>
            <person name="Lienard T."/>
            <person name="Christmann A."/>
            <person name="Boemecke M."/>
            <person name="Steckel S."/>
            <person name="Bhattacharyya A."/>
            <person name="Lykidis A."/>
            <person name="Overbeek R."/>
            <person name="Klenk H.-P."/>
            <person name="Gunsalus R.P."/>
            <person name="Fritz H.-J."/>
            <person name="Gottschalk G."/>
        </authorList>
    </citation>
    <scope>NUCLEOTIDE SEQUENCE [LARGE SCALE GENOMIC DNA]</scope>
    <source>
        <strain>ATCC BAA-159 / DSM 3647 / Goe1 / Go1 / JCM 11833 / OCM 88</strain>
    </source>
</reference>
<organism>
    <name type="scientific">Methanosarcina mazei (strain ATCC BAA-159 / DSM 3647 / Goe1 / Go1 / JCM 11833 / OCM 88)</name>
    <name type="common">Methanosarcina frisia</name>
    <dbReference type="NCBI Taxonomy" id="192952"/>
    <lineage>
        <taxon>Archaea</taxon>
        <taxon>Methanobacteriati</taxon>
        <taxon>Methanobacteriota</taxon>
        <taxon>Stenosarchaea group</taxon>
        <taxon>Methanomicrobia</taxon>
        <taxon>Methanosarcinales</taxon>
        <taxon>Methanosarcinaceae</taxon>
        <taxon>Methanosarcina</taxon>
    </lineage>
</organism>
<comment type="similarity">
    <text evidence="1">Belongs to the SUI1 family.</text>
</comment>
<proteinExistence type="inferred from homology"/>
<keyword id="KW-0648">Protein biosynthesis</keyword>
<keyword id="KW-0810">Translation regulation</keyword>